<name>FABZ_RHOPB</name>
<evidence type="ECO:0000255" key="1">
    <source>
        <dbReference type="HAMAP-Rule" id="MF_00406"/>
    </source>
</evidence>
<sequence>MESPIRIETVDINTILKTLPHRYPFLLIDRVVNIRQDYSGIGIKNVSFNEPAFLGHFPERPVFPGVLMIEGMAQTAGVIGIMSVEGTEKPRAVYFLTIDKCKFRKPVLPGDTIEYHMKSIGRRKSMWWFHGDAKVNGVVVAEADVGAMLTD</sequence>
<protein>
    <recommendedName>
        <fullName evidence="1">3-hydroxyacyl-[acyl-carrier-protein] dehydratase FabZ</fullName>
        <ecNumber evidence="1">4.2.1.59</ecNumber>
    </recommendedName>
    <alternativeName>
        <fullName evidence="1">(3R)-hydroxymyristoyl-[acyl-carrier-protein] dehydratase</fullName>
        <shortName evidence="1">(3R)-hydroxymyristoyl-ACP dehydrase</shortName>
    </alternativeName>
    <alternativeName>
        <fullName evidence="1">Beta-hydroxyacyl-ACP dehydratase</fullName>
    </alternativeName>
</protein>
<keyword id="KW-0963">Cytoplasm</keyword>
<keyword id="KW-0441">Lipid A biosynthesis</keyword>
<keyword id="KW-0444">Lipid biosynthesis</keyword>
<keyword id="KW-0443">Lipid metabolism</keyword>
<keyword id="KW-0456">Lyase</keyword>
<feature type="chain" id="PRO_0000242897" description="3-hydroxyacyl-[acyl-carrier-protein] dehydratase FabZ">
    <location>
        <begin position="1"/>
        <end position="151"/>
    </location>
</feature>
<feature type="active site" evidence="1">
    <location>
        <position position="56"/>
    </location>
</feature>
<reference key="1">
    <citation type="submission" date="2006-03" db="EMBL/GenBank/DDBJ databases">
        <title>Complete sequence of Rhodopseudomonas palustris BisB18.</title>
        <authorList>
            <consortium name="US DOE Joint Genome Institute"/>
            <person name="Copeland A."/>
            <person name="Lucas S."/>
            <person name="Lapidus A."/>
            <person name="Barry K."/>
            <person name="Detter J.C."/>
            <person name="Glavina del Rio T."/>
            <person name="Hammon N."/>
            <person name="Israni S."/>
            <person name="Dalin E."/>
            <person name="Tice H."/>
            <person name="Pitluck S."/>
            <person name="Chain P."/>
            <person name="Malfatti S."/>
            <person name="Shin M."/>
            <person name="Vergez L."/>
            <person name="Schmutz J."/>
            <person name="Larimer F."/>
            <person name="Land M."/>
            <person name="Hauser L."/>
            <person name="Pelletier D.A."/>
            <person name="Kyrpides N."/>
            <person name="Anderson I."/>
            <person name="Oda Y."/>
            <person name="Harwood C.S."/>
            <person name="Richardson P."/>
        </authorList>
    </citation>
    <scope>NUCLEOTIDE SEQUENCE [LARGE SCALE GENOMIC DNA]</scope>
    <source>
        <strain>BisB18</strain>
    </source>
</reference>
<accession>Q215D9</accession>
<dbReference type="EC" id="4.2.1.59" evidence="1"/>
<dbReference type="EMBL" id="CP000301">
    <property type="protein sequence ID" value="ABD87997.1"/>
    <property type="molecule type" value="Genomic_DNA"/>
</dbReference>
<dbReference type="SMR" id="Q215D9"/>
<dbReference type="STRING" id="316056.RPC_2446"/>
<dbReference type="KEGG" id="rpc:RPC_2446"/>
<dbReference type="eggNOG" id="COG0764">
    <property type="taxonomic scope" value="Bacteria"/>
</dbReference>
<dbReference type="HOGENOM" id="CLU_078912_1_0_5"/>
<dbReference type="OrthoDB" id="9772788at2"/>
<dbReference type="GO" id="GO:0005737">
    <property type="term" value="C:cytoplasm"/>
    <property type="evidence" value="ECO:0007669"/>
    <property type="project" value="UniProtKB-SubCell"/>
</dbReference>
<dbReference type="GO" id="GO:0016020">
    <property type="term" value="C:membrane"/>
    <property type="evidence" value="ECO:0007669"/>
    <property type="project" value="GOC"/>
</dbReference>
<dbReference type="GO" id="GO:0019171">
    <property type="term" value="F:(3R)-hydroxyacyl-[acyl-carrier-protein] dehydratase activity"/>
    <property type="evidence" value="ECO:0007669"/>
    <property type="project" value="UniProtKB-EC"/>
</dbReference>
<dbReference type="GO" id="GO:0006633">
    <property type="term" value="P:fatty acid biosynthetic process"/>
    <property type="evidence" value="ECO:0007669"/>
    <property type="project" value="UniProtKB-UniRule"/>
</dbReference>
<dbReference type="GO" id="GO:0009245">
    <property type="term" value="P:lipid A biosynthetic process"/>
    <property type="evidence" value="ECO:0007669"/>
    <property type="project" value="UniProtKB-UniRule"/>
</dbReference>
<dbReference type="CDD" id="cd01288">
    <property type="entry name" value="FabZ"/>
    <property type="match status" value="1"/>
</dbReference>
<dbReference type="FunFam" id="3.10.129.10:FF:000001">
    <property type="entry name" value="3-hydroxyacyl-[acyl-carrier-protein] dehydratase FabZ"/>
    <property type="match status" value="1"/>
</dbReference>
<dbReference type="Gene3D" id="3.10.129.10">
    <property type="entry name" value="Hotdog Thioesterase"/>
    <property type="match status" value="1"/>
</dbReference>
<dbReference type="HAMAP" id="MF_00406">
    <property type="entry name" value="FabZ"/>
    <property type="match status" value="1"/>
</dbReference>
<dbReference type="InterPro" id="IPR013114">
    <property type="entry name" value="FabA_FabZ"/>
</dbReference>
<dbReference type="InterPro" id="IPR010084">
    <property type="entry name" value="FabZ"/>
</dbReference>
<dbReference type="InterPro" id="IPR029069">
    <property type="entry name" value="HotDog_dom_sf"/>
</dbReference>
<dbReference type="NCBIfam" id="TIGR01750">
    <property type="entry name" value="fabZ"/>
    <property type="match status" value="1"/>
</dbReference>
<dbReference type="NCBIfam" id="NF000582">
    <property type="entry name" value="PRK00006.1"/>
    <property type="match status" value="1"/>
</dbReference>
<dbReference type="PANTHER" id="PTHR30272">
    <property type="entry name" value="3-HYDROXYACYL-[ACYL-CARRIER-PROTEIN] DEHYDRATASE"/>
    <property type="match status" value="1"/>
</dbReference>
<dbReference type="PANTHER" id="PTHR30272:SF1">
    <property type="entry name" value="3-HYDROXYACYL-[ACYL-CARRIER-PROTEIN] DEHYDRATASE"/>
    <property type="match status" value="1"/>
</dbReference>
<dbReference type="Pfam" id="PF07977">
    <property type="entry name" value="FabA"/>
    <property type="match status" value="1"/>
</dbReference>
<dbReference type="SUPFAM" id="SSF54637">
    <property type="entry name" value="Thioesterase/thiol ester dehydrase-isomerase"/>
    <property type="match status" value="1"/>
</dbReference>
<comment type="function">
    <text evidence="1">Involved in unsaturated fatty acids biosynthesis. Catalyzes the dehydration of short chain beta-hydroxyacyl-ACPs and long chain saturated and unsaturated beta-hydroxyacyl-ACPs.</text>
</comment>
<comment type="catalytic activity">
    <reaction evidence="1">
        <text>a (3R)-hydroxyacyl-[ACP] = a (2E)-enoyl-[ACP] + H2O</text>
        <dbReference type="Rhea" id="RHEA:13097"/>
        <dbReference type="Rhea" id="RHEA-COMP:9925"/>
        <dbReference type="Rhea" id="RHEA-COMP:9945"/>
        <dbReference type="ChEBI" id="CHEBI:15377"/>
        <dbReference type="ChEBI" id="CHEBI:78784"/>
        <dbReference type="ChEBI" id="CHEBI:78827"/>
        <dbReference type="EC" id="4.2.1.59"/>
    </reaction>
</comment>
<comment type="subcellular location">
    <subcellularLocation>
        <location evidence="1">Cytoplasm</location>
    </subcellularLocation>
</comment>
<comment type="similarity">
    <text evidence="1">Belongs to the thioester dehydratase family. FabZ subfamily.</text>
</comment>
<organism>
    <name type="scientific">Rhodopseudomonas palustris (strain BisB18)</name>
    <dbReference type="NCBI Taxonomy" id="316056"/>
    <lineage>
        <taxon>Bacteria</taxon>
        <taxon>Pseudomonadati</taxon>
        <taxon>Pseudomonadota</taxon>
        <taxon>Alphaproteobacteria</taxon>
        <taxon>Hyphomicrobiales</taxon>
        <taxon>Nitrobacteraceae</taxon>
        <taxon>Rhodopseudomonas</taxon>
    </lineage>
</organism>
<proteinExistence type="inferred from homology"/>
<gene>
    <name evidence="1" type="primary">fabZ</name>
    <name type="ordered locus">RPC_2446</name>
</gene>